<proteinExistence type="evidence at protein level"/>
<feature type="signal peptide" evidence="2 6">
    <location>
        <begin position="1"/>
        <end position="21"/>
    </location>
</feature>
<feature type="chain" id="PRO_0000401103" description="Mulatexin" evidence="5">
    <location>
        <begin position="22"/>
        <end position="415"/>
    </location>
</feature>
<feature type="domain" description="Chitin-binding type-1 1" evidence="3">
    <location>
        <begin position="23"/>
        <end position="66"/>
    </location>
</feature>
<feature type="domain" description="Chitin-binding type-1 2" evidence="3">
    <location>
        <begin position="125"/>
        <end position="167"/>
    </location>
</feature>
<feature type="region of interest" description="Disordered" evidence="4">
    <location>
        <begin position="65"/>
        <end position="127"/>
    </location>
</feature>
<feature type="compositionally biased region" description="Pro residues" evidence="4">
    <location>
        <begin position="67"/>
        <end position="121"/>
    </location>
</feature>
<feature type="glycosylation site" description="N-linked (GlcNAc...) asparagine" evidence="2">
    <location>
        <position position="264"/>
    </location>
</feature>
<feature type="disulfide bond" evidence="1 3">
    <location>
        <begin position="26"/>
        <end position="41"/>
    </location>
</feature>
<feature type="disulfide bond" evidence="1 3">
    <location>
        <begin position="35"/>
        <end position="47"/>
    </location>
</feature>
<feature type="disulfide bond" evidence="1 3">
    <location>
        <begin position="40"/>
        <end position="54"/>
    </location>
</feature>
<feature type="disulfide bond" evidence="1 3">
    <location>
        <begin position="60"/>
        <end position="64"/>
    </location>
</feature>
<feature type="disulfide bond" evidence="1 3">
    <location>
        <begin position="128"/>
        <end position="143"/>
    </location>
</feature>
<feature type="disulfide bond" evidence="1 3">
    <location>
        <begin position="137"/>
        <end position="149"/>
    </location>
</feature>
<feature type="disulfide bond" evidence="1 3">
    <location>
        <begin position="142"/>
        <end position="156"/>
    </location>
</feature>
<feature type="disulfide bond" evidence="1 3">
    <location>
        <begin position="161"/>
        <end position="165"/>
    </location>
</feature>
<evidence type="ECO:0000250" key="1">
    <source>
        <dbReference type="UniProtKB" id="P11218"/>
    </source>
</evidence>
<evidence type="ECO:0000255" key="2"/>
<evidence type="ECO:0000255" key="3">
    <source>
        <dbReference type="PROSITE-ProRule" id="PRU00261"/>
    </source>
</evidence>
<evidence type="ECO:0000256" key="4">
    <source>
        <dbReference type="SAM" id="MobiDB-lite"/>
    </source>
</evidence>
<evidence type="ECO:0000269" key="5">
    <source>
    </source>
</evidence>
<evidence type="ECO:0000303" key="6">
    <source>
    </source>
</evidence>
<evidence type="ECO:0000312" key="7">
    <source>
        <dbReference type="EMBL" id="ABS86614.2"/>
    </source>
</evidence>
<accession>A7XQ02</accession>
<reference evidence="7" key="1">
    <citation type="journal article" date="2009" name="Phytochemistry">
        <title>A unique latex protein, MLX56, defends mulberry trees from insects.</title>
        <authorList>
            <person name="Wasano N."/>
            <person name="Konno K."/>
            <person name="Nakamura M."/>
            <person name="Hirayama C."/>
            <person name="Hattori M."/>
            <person name="Tateishi K."/>
        </authorList>
    </citation>
    <scope>NUCLEOTIDE SEQUENCE [MRNA]</scope>
    <scope>PROTEIN SEQUENCE OF 22-30</scope>
    <scope>FUNCTION</scope>
    <scope>CATALYTIC ACTIVITY</scope>
    <scope>SUBCELLULAR LOCATION</scope>
    <scope>GLYCOSYLATION</scope>
    <source>
        <strain evidence="5">cv. Shin-ichinose</strain>
        <tissue evidence="5">Latex</tissue>
    </source>
</reference>
<sequence>MKFRTLLIIFSLVFLLEIVSASEPQCGRDAGGALCHGNLCCSHWGFCGTTAIYCDVDQGCQSQCWSSPPPPSPPPPPPSPPPPSPPPPSPPPPSPPPPSPPPPSPPPPSPPPPSPPPPGGPERPDHRCGRALGNPPCNPGRCCSIHNWCGSTAAYCRGSSCQYQCWNSLLSALISNGNNAISKIISKSVFDEMFKHMKDCPSKGFYSYDAFIIATTSFPHFGTTGDITTRKRELAAFFAQTSLATTGQRFDSQDLYVWGYCHINETTNGNDNDYCTSAHWPCPSGKKYNSRGAVQLTHNYNYGLAGEALGLDLINNPDLVATDPVISFKTAIWFWMAQHDNKLSCHDILINANSGYVIGNIIKNSGYQNGLITNTISTMRGIGYYKRYCDMLGVSYGDNLDSWYDQTHFSEVARM</sequence>
<keyword id="KW-0147">Chitin-binding</keyword>
<keyword id="KW-0903">Direct protein sequencing</keyword>
<keyword id="KW-1015">Disulfide bond</keyword>
<keyword id="KW-0325">Glycoprotein</keyword>
<keyword id="KW-0611">Plant defense</keyword>
<keyword id="KW-0677">Repeat</keyword>
<keyword id="KW-0964">Secreted</keyword>
<keyword id="KW-0732">Signal</keyword>
<protein>
    <recommendedName>
        <fullName evidence="6">Mulatexin</fullName>
        <shortName evidence="6">MLX56</shortName>
    </recommendedName>
    <alternativeName>
        <fullName evidence="7">Latex protein</fullName>
    </alternativeName>
</protein>
<comment type="function">
    <text evidence="5">Chitin-binding protein which slows larval growth when consumed by the lepidopteran species S.ricini and M.brassica, but not when consumed by the mulberry specialist B.mori. Lacks chitinase activity.</text>
</comment>
<comment type="subcellular location">
    <subcellularLocation>
        <location evidence="5">Secreted</location>
    </subcellularLocation>
</comment>
<comment type="PTM">
    <text evidence="5">Glycosylated.</text>
</comment>
<comment type="miscellaneous">
    <text evidence="5">On the 2D-gel the determined MW of this protein is: 56 kDa.</text>
</comment>
<name>MLX56_MORAL</name>
<organism>
    <name type="scientific">Morus alba</name>
    <name type="common">White mulberry</name>
    <dbReference type="NCBI Taxonomy" id="3498"/>
    <lineage>
        <taxon>Eukaryota</taxon>
        <taxon>Viridiplantae</taxon>
        <taxon>Streptophyta</taxon>
        <taxon>Embryophyta</taxon>
        <taxon>Tracheophyta</taxon>
        <taxon>Spermatophyta</taxon>
        <taxon>Magnoliopsida</taxon>
        <taxon>eudicotyledons</taxon>
        <taxon>Gunneridae</taxon>
        <taxon>Pentapetalae</taxon>
        <taxon>rosids</taxon>
        <taxon>fabids</taxon>
        <taxon>Rosales</taxon>
        <taxon>Moraceae</taxon>
        <taxon>Moreae</taxon>
        <taxon>Morus</taxon>
    </lineage>
</organism>
<dbReference type="EMBL" id="EF535852">
    <property type="protein sequence ID" value="ABS86614.2"/>
    <property type="molecule type" value="mRNA"/>
</dbReference>
<dbReference type="SMR" id="A7XQ02"/>
<dbReference type="CAZy" id="CBM18">
    <property type="family name" value="Carbohydrate-Binding Module Family 18"/>
</dbReference>
<dbReference type="CAZy" id="GH19">
    <property type="family name" value="Glycoside Hydrolase Family 19"/>
</dbReference>
<dbReference type="GO" id="GO:0005576">
    <property type="term" value="C:extracellular region"/>
    <property type="evidence" value="ECO:0000314"/>
    <property type="project" value="UniProtKB"/>
</dbReference>
<dbReference type="GO" id="GO:0008061">
    <property type="term" value="F:chitin binding"/>
    <property type="evidence" value="ECO:0007669"/>
    <property type="project" value="UniProtKB-KW"/>
</dbReference>
<dbReference type="GO" id="GO:0016998">
    <property type="term" value="P:cell wall macromolecule catabolic process"/>
    <property type="evidence" value="ECO:0007669"/>
    <property type="project" value="InterPro"/>
</dbReference>
<dbReference type="GO" id="GO:0050832">
    <property type="term" value="P:defense response to fungus"/>
    <property type="evidence" value="ECO:0007669"/>
    <property type="project" value="TreeGrafter"/>
</dbReference>
<dbReference type="GO" id="GO:0002213">
    <property type="term" value="P:defense response to insect"/>
    <property type="evidence" value="ECO:0000314"/>
    <property type="project" value="UniProtKB"/>
</dbReference>
<dbReference type="CDD" id="cd00325">
    <property type="entry name" value="chitinase_GH19"/>
    <property type="match status" value="1"/>
</dbReference>
<dbReference type="CDD" id="cd00035">
    <property type="entry name" value="ChtBD1"/>
    <property type="match status" value="1"/>
</dbReference>
<dbReference type="CDD" id="cd06921">
    <property type="entry name" value="ChtBD1_GH19_hevein"/>
    <property type="match status" value="1"/>
</dbReference>
<dbReference type="FunFam" id="3.30.20.10:FF:000001">
    <property type="entry name" value="Endochitinase (Chitinase)"/>
    <property type="match status" value="1"/>
</dbReference>
<dbReference type="Gene3D" id="1.10.530.10">
    <property type="match status" value="1"/>
</dbReference>
<dbReference type="Gene3D" id="3.30.20.10">
    <property type="entry name" value="Endochitinase, domain 2"/>
    <property type="match status" value="1"/>
</dbReference>
<dbReference type="Gene3D" id="3.30.60.10">
    <property type="entry name" value="Endochitinase-like"/>
    <property type="match status" value="2"/>
</dbReference>
<dbReference type="InterPro" id="IPR001002">
    <property type="entry name" value="Chitin-bd_1"/>
</dbReference>
<dbReference type="InterPro" id="IPR018371">
    <property type="entry name" value="Chitin-binding_1_CS"/>
</dbReference>
<dbReference type="InterPro" id="IPR036861">
    <property type="entry name" value="Endochitinase-like_sf"/>
</dbReference>
<dbReference type="InterPro" id="IPR000726">
    <property type="entry name" value="Glyco_hydro_19_cat"/>
</dbReference>
<dbReference type="InterPro" id="IPR023346">
    <property type="entry name" value="Lysozyme-like_dom_sf"/>
</dbReference>
<dbReference type="PANTHER" id="PTHR22595:SF79">
    <property type="entry name" value="CHITINASE 12"/>
    <property type="match status" value="1"/>
</dbReference>
<dbReference type="PANTHER" id="PTHR22595">
    <property type="entry name" value="CHITINASE-RELATED"/>
    <property type="match status" value="1"/>
</dbReference>
<dbReference type="Pfam" id="PF00187">
    <property type="entry name" value="Chitin_bind_1"/>
    <property type="match status" value="2"/>
</dbReference>
<dbReference type="Pfam" id="PF00182">
    <property type="entry name" value="Glyco_hydro_19"/>
    <property type="match status" value="1"/>
</dbReference>
<dbReference type="PRINTS" id="PR01217">
    <property type="entry name" value="PRICHEXTENSN"/>
</dbReference>
<dbReference type="SMART" id="SM00270">
    <property type="entry name" value="ChtBD1"/>
    <property type="match status" value="2"/>
</dbReference>
<dbReference type="SUPFAM" id="SSF81995">
    <property type="entry name" value="beta-sandwich domain of Sec23/24"/>
    <property type="match status" value="1"/>
</dbReference>
<dbReference type="SUPFAM" id="SSF53955">
    <property type="entry name" value="Lysozyme-like"/>
    <property type="match status" value="1"/>
</dbReference>
<dbReference type="SUPFAM" id="SSF57016">
    <property type="entry name" value="Plant lectins/antimicrobial peptides"/>
    <property type="match status" value="2"/>
</dbReference>
<dbReference type="PROSITE" id="PS00026">
    <property type="entry name" value="CHIT_BIND_I_1"/>
    <property type="match status" value="1"/>
</dbReference>
<dbReference type="PROSITE" id="PS50941">
    <property type="entry name" value="CHIT_BIND_I_2"/>
    <property type="match status" value="2"/>
</dbReference>
<dbReference type="PROSITE" id="PS00773">
    <property type="entry name" value="CHITINASE_19_1"/>
    <property type="match status" value="1"/>
</dbReference>
<dbReference type="PROSITE" id="PS00774">
    <property type="entry name" value="CHITINASE_19_2"/>
    <property type="match status" value="1"/>
</dbReference>